<name>HRCA_STRT2</name>
<proteinExistence type="inferred from homology"/>
<protein>
    <recommendedName>
        <fullName evidence="1">Heat-inducible transcription repressor HrcA</fullName>
    </recommendedName>
</protein>
<accession>Q5M6D3</accession>
<keyword id="KW-1185">Reference proteome</keyword>
<keyword id="KW-0678">Repressor</keyword>
<keyword id="KW-0346">Stress response</keyword>
<keyword id="KW-0804">Transcription</keyword>
<keyword id="KW-0805">Transcription regulation</keyword>
<reference key="1">
    <citation type="journal article" date="2004" name="Nat. Biotechnol.">
        <title>Complete sequence and comparative genome analysis of the dairy bacterium Streptococcus thermophilus.</title>
        <authorList>
            <person name="Bolotin A."/>
            <person name="Quinquis B."/>
            <person name="Renault P."/>
            <person name="Sorokin A."/>
            <person name="Ehrlich S.D."/>
            <person name="Kulakauskas S."/>
            <person name="Lapidus A."/>
            <person name="Goltsman E."/>
            <person name="Mazur M."/>
            <person name="Pusch G.D."/>
            <person name="Fonstein M."/>
            <person name="Overbeek R."/>
            <person name="Kyprides N."/>
            <person name="Purnelle B."/>
            <person name="Prozzi D."/>
            <person name="Ngui K."/>
            <person name="Masuy D."/>
            <person name="Hancy F."/>
            <person name="Burteau S."/>
            <person name="Boutry M."/>
            <person name="Delcour J."/>
            <person name="Goffeau A."/>
            <person name="Hols P."/>
        </authorList>
    </citation>
    <scope>NUCLEOTIDE SEQUENCE [LARGE SCALE GENOMIC DNA]</scope>
    <source>
        <strain>ATCC BAA-250 / LMG 18311</strain>
    </source>
</reference>
<feature type="chain" id="PRO_1000010465" description="Heat-inducible transcription repressor HrcA">
    <location>
        <begin position="1"/>
        <end position="360"/>
    </location>
</feature>
<gene>
    <name evidence="1" type="primary">hrcA</name>
    <name type="ordered locus">stu0118</name>
</gene>
<organism>
    <name type="scientific">Streptococcus thermophilus (strain ATCC BAA-250 / LMG 18311)</name>
    <dbReference type="NCBI Taxonomy" id="264199"/>
    <lineage>
        <taxon>Bacteria</taxon>
        <taxon>Bacillati</taxon>
        <taxon>Bacillota</taxon>
        <taxon>Bacilli</taxon>
        <taxon>Lactobacillales</taxon>
        <taxon>Streptococcaceae</taxon>
        <taxon>Streptococcus</taxon>
    </lineage>
</organism>
<comment type="function">
    <text evidence="1">Negative regulator of class I heat shock genes (grpE-dnaK-dnaJ and groELS operons). Prevents heat-shock induction of these operons.</text>
</comment>
<comment type="similarity">
    <text evidence="1">Belongs to the HrcA family.</text>
</comment>
<dbReference type="EMBL" id="CP000023">
    <property type="protein sequence ID" value="AAV59843.1"/>
    <property type="molecule type" value="Genomic_DNA"/>
</dbReference>
<dbReference type="RefSeq" id="WP_011225328.1">
    <property type="nucleotide sequence ID" value="NC_006448.1"/>
</dbReference>
<dbReference type="SMR" id="Q5M6D3"/>
<dbReference type="STRING" id="264199.stu0118"/>
<dbReference type="DNASU" id="3164703"/>
<dbReference type="GeneID" id="66898043"/>
<dbReference type="KEGG" id="stl:stu0118"/>
<dbReference type="eggNOG" id="COG1420">
    <property type="taxonomic scope" value="Bacteria"/>
</dbReference>
<dbReference type="HOGENOM" id="CLU_050019_1_0_9"/>
<dbReference type="Proteomes" id="UP000001170">
    <property type="component" value="Chromosome"/>
</dbReference>
<dbReference type="GO" id="GO:0003677">
    <property type="term" value="F:DNA binding"/>
    <property type="evidence" value="ECO:0007669"/>
    <property type="project" value="InterPro"/>
</dbReference>
<dbReference type="GO" id="GO:0045892">
    <property type="term" value="P:negative regulation of DNA-templated transcription"/>
    <property type="evidence" value="ECO:0007669"/>
    <property type="project" value="UniProtKB-UniRule"/>
</dbReference>
<dbReference type="Gene3D" id="3.30.450.40">
    <property type="match status" value="1"/>
</dbReference>
<dbReference type="Gene3D" id="3.30.390.60">
    <property type="entry name" value="Heat-inducible transcription repressor hrca homolog, domain 3"/>
    <property type="match status" value="1"/>
</dbReference>
<dbReference type="Gene3D" id="1.10.10.10">
    <property type="entry name" value="Winged helix-like DNA-binding domain superfamily/Winged helix DNA-binding domain"/>
    <property type="match status" value="1"/>
</dbReference>
<dbReference type="HAMAP" id="MF_00081">
    <property type="entry name" value="HrcA"/>
    <property type="match status" value="1"/>
</dbReference>
<dbReference type="InterPro" id="IPR029016">
    <property type="entry name" value="GAF-like_dom_sf"/>
</dbReference>
<dbReference type="InterPro" id="IPR002571">
    <property type="entry name" value="HrcA"/>
</dbReference>
<dbReference type="InterPro" id="IPR021153">
    <property type="entry name" value="HrcA_C"/>
</dbReference>
<dbReference type="InterPro" id="IPR036388">
    <property type="entry name" value="WH-like_DNA-bd_sf"/>
</dbReference>
<dbReference type="InterPro" id="IPR036390">
    <property type="entry name" value="WH_DNA-bd_sf"/>
</dbReference>
<dbReference type="InterPro" id="IPR005104">
    <property type="entry name" value="WHTH_HrcA_DNA-bd"/>
</dbReference>
<dbReference type="InterPro" id="IPR023120">
    <property type="entry name" value="WHTH_transcript_rep_HrcA_IDD"/>
</dbReference>
<dbReference type="NCBIfam" id="TIGR00331">
    <property type="entry name" value="hrcA"/>
    <property type="match status" value="1"/>
</dbReference>
<dbReference type="PANTHER" id="PTHR34824">
    <property type="entry name" value="HEAT-INDUCIBLE TRANSCRIPTION REPRESSOR HRCA"/>
    <property type="match status" value="1"/>
</dbReference>
<dbReference type="PANTHER" id="PTHR34824:SF1">
    <property type="entry name" value="HEAT-INDUCIBLE TRANSCRIPTION REPRESSOR HRCA"/>
    <property type="match status" value="1"/>
</dbReference>
<dbReference type="Pfam" id="PF01628">
    <property type="entry name" value="HrcA"/>
    <property type="match status" value="1"/>
</dbReference>
<dbReference type="Pfam" id="PF03444">
    <property type="entry name" value="HrcA_DNA-bdg"/>
    <property type="match status" value="1"/>
</dbReference>
<dbReference type="PIRSF" id="PIRSF005485">
    <property type="entry name" value="HrcA"/>
    <property type="match status" value="1"/>
</dbReference>
<dbReference type="SUPFAM" id="SSF55781">
    <property type="entry name" value="GAF domain-like"/>
    <property type="match status" value="1"/>
</dbReference>
<dbReference type="SUPFAM" id="SSF46785">
    <property type="entry name" value="Winged helix' DNA-binding domain"/>
    <property type="match status" value="1"/>
</dbReference>
<sequence>MITQRQNAILNLIVEMFTRTHEPVCSKALQDSIDSSSATIRNDMAKLEKMGYLEKAHISSGRMPSRAGFQYFVANSLNLDTIDEQDVYQVVKAFDFEAFKLEDILDAAAKLLAEMTGCTAVIQDVEPTKQRLTGFEIVQLSNHDALAVLTLDESKPVTVQFAIPKNFLSSDLEIFHKLVQGRFLGNTVLDIHYRLRTETPQIVQKYFKITDNVLDLFDYIFSHLFKELIFIEGKVASLAYADLKTYQFLDNPQHVALALRSAISDDEVTKISVAESTEEALENVTVMSHKFLIPYRGTALMHVIGPIEMDYRRMVSLVNVISRVLVMKLTDYYRYLNSNHYEVFLSRNVLKNIERGECLD</sequence>
<evidence type="ECO:0000255" key="1">
    <source>
        <dbReference type="HAMAP-Rule" id="MF_00081"/>
    </source>
</evidence>